<proteinExistence type="inferred from homology"/>
<evidence type="ECO:0000250" key="1"/>
<evidence type="ECO:0000250" key="2">
    <source>
        <dbReference type="UniProtKB" id="Q15465"/>
    </source>
</evidence>
<evidence type="ECO:0000305" key="3"/>
<name>SHH_RASEL</name>
<protein>
    <recommendedName>
        <fullName>Sonic hedgehog protein</fullName>
        <shortName>SHH</shortName>
    </recommendedName>
</protein>
<organism>
    <name type="scientific">Rasbora elegans</name>
    <name type="common">Elegant rasbora</name>
    <dbReference type="NCBI Taxonomy" id="27712"/>
    <lineage>
        <taxon>Eukaryota</taxon>
        <taxon>Metazoa</taxon>
        <taxon>Chordata</taxon>
        <taxon>Craniata</taxon>
        <taxon>Vertebrata</taxon>
        <taxon>Euteleostomi</taxon>
        <taxon>Actinopterygii</taxon>
        <taxon>Neopterygii</taxon>
        <taxon>Teleostei</taxon>
        <taxon>Ostariophysi</taxon>
        <taxon>Cypriniformes</taxon>
        <taxon>Danionidae</taxon>
        <taxon>Rasborinae</taxon>
        <taxon>Rasbora</taxon>
    </lineage>
</organism>
<feature type="chain" id="PRO_0000058735" description="Sonic hedgehog protein">
    <location>
        <begin position="1" status="less than"/>
        <end position="121" status="greater than"/>
    </location>
</feature>
<feature type="binding site" evidence="2">
    <location>
        <position position="60"/>
    </location>
    <ligand>
        <name>Ca(2+)</name>
        <dbReference type="ChEBI" id="CHEBI:29108"/>
        <label>1</label>
    </ligand>
</feature>
<feature type="binding site" evidence="2">
    <location>
        <position position="61"/>
    </location>
    <ligand>
        <name>Ca(2+)</name>
        <dbReference type="ChEBI" id="CHEBI:29108"/>
        <label>1</label>
    </ligand>
</feature>
<feature type="binding site" evidence="2">
    <location>
        <position position="61"/>
    </location>
    <ligand>
        <name>Ca(2+)</name>
        <dbReference type="ChEBI" id="CHEBI:29108"/>
        <label>2</label>
    </ligand>
</feature>
<feature type="binding site" evidence="2">
    <location>
        <position position="76"/>
    </location>
    <ligand>
        <name>Ca(2+)</name>
        <dbReference type="ChEBI" id="CHEBI:29108"/>
        <label>1</label>
    </ligand>
</feature>
<feature type="binding site" evidence="2">
    <location>
        <position position="77"/>
    </location>
    <ligand>
        <name>Ca(2+)</name>
        <dbReference type="ChEBI" id="CHEBI:29108"/>
        <label>1</label>
    </ligand>
</feature>
<feature type="binding site" evidence="2">
    <location>
        <position position="77"/>
    </location>
    <ligand>
        <name>Ca(2+)</name>
        <dbReference type="ChEBI" id="CHEBI:29108"/>
        <label>2</label>
    </ligand>
</feature>
<feature type="binding site" evidence="2">
    <location>
        <position position="80"/>
    </location>
    <ligand>
        <name>Ca(2+)</name>
        <dbReference type="ChEBI" id="CHEBI:29108"/>
        <label>2</label>
    </ligand>
</feature>
<feature type="binding site" evidence="2">
    <location>
        <position position="82"/>
    </location>
    <ligand>
        <name>Ca(2+)</name>
        <dbReference type="ChEBI" id="CHEBI:29108"/>
        <label>2</label>
    </ligand>
</feature>
<feature type="binding site" evidence="2">
    <location>
        <position position="91"/>
    </location>
    <ligand>
        <name>Zn(2+)</name>
        <dbReference type="ChEBI" id="CHEBI:29105"/>
    </ligand>
</feature>
<feature type="binding site" evidence="2">
    <location>
        <position position="98"/>
    </location>
    <ligand>
        <name>Zn(2+)</name>
        <dbReference type="ChEBI" id="CHEBI:29105"/>
    </ligand>
</feature>
<feature type="non-consecutive residues" evidence="3">
    <location>
        <begin position="63"/>
        <end position="64"/>
    </location>
</feature>
<feature type="non-terminal residue">
    <location>
        <position position="1"/>
    </location>
</feature>
<feature type="non-terminal residue">
    <location>
        <position position="121"/>
    </location>
</feature>
<dbReference type="EMBL" id="U51355">
    <property type="protein sequence ID" value="AAB38578.1"/>
    <property type="molecule type" value="Genomic_DNA"/>
</dbReference>
<dbReference type="EMBL" id="U51374">
    <property type="protein sequence ID" value="AAB38597.1"/>
    <property type="molecule type" value="Genomic_DNA"/>
</dbReference>
<dbReference type="SMR" id="P79858"/>
<dbReference type="GO" id="GO:0005615">
    <property type="term" value="C:extracellular space"/>
    <property type="evidence" value="ECO:0007669"/>
    <property type="project" value="TreeGrafter"/>
</dbReference>
<dbReference type="GO" id="GO:0005886">
    <property type="term" value="C:plasma membrane"/>
    <property type="evidence" value="ECO:0007669"/>
    <property type="project" value="UniProtKB-SubCell"/>
</dbReference>
<dbReference type="GO" id="GO:0005509">
    <property type="term" value="F:calcium ion binding"/>
    <property type="evidence" value="ECO:0007669"/>
    <property type="project" value="TreeGrafter"/>
</dbReference>
<dbReference type="GO" id="GO:0005113">
    <property type="term" value="F:patched binding"/>
    <property type="evidence" value="ECO:0007669"/>
    <property type="project" value="TreeGrafter"/>
</dbReference>
<dbReference type="GO" id="GO:0008233">
    <property type="term" value="F:peptidase activity"/>
    <property type="evidence" value="ECO:0007669"/>
    <property type="project" value="UniProtKB-KW"/>
</dbReference>
<dbReference type="GO" id="GO:0048513">
    <property type="term" value="P:animal organ development"/>
    <property type="evidence" value="ECO:0007669"/>
    <property type="project" value="UniProtKB-ARBA"/>
</dbReference>
<dbReference type="GO" id="GO:0048468">
    <property type="term" value="P:cell development"/>
    <property type="evidence" value="ECO:0007669"/>
    <property type="project" value="UniProtKB-ARBA"/>
</dbReference>
<dbReference type="GO" id="GO:0001708">
    <property type="term" value="P:cell fate specification"/>
    <property type="evidence" value="ECO:0007669"/>
    <property type="project" value="TreeGrafter"/>
</dbReference>
<dbReference type="GO" id="GO:0007267">
    <property type="term" value="P:cell-cell signaling"/>
    <property type="evidence" value="ECO:0007669"/>
    <property type="project" value="InterPro"/>
</dbReference>
<dbReference type="GO" id="GO:0007417">
    <property type="term" value="P:central nervous system development"/>
    <property type="evidence" value="ECO:0007669"/>
    <property type="project" value="UniProtKB-ARBA"/>
</dbReference>
<dbReference type="GO" id="GO:0030182">
    <property type="term" value="P:neuron differentiation"/>
    <property type="evidence" value="ECO:0007669"/>
    <property type="project" value="UniProtKB-ARBA"/>
</dbReference>
<dbReference type="GO" id="GO:0006508">
    <property type="term" value="P:proteolysis"/>
    <property type="evidence" value="ECO:0007669"/>
    <property type="project" value="UniProtKB-KW"/>
</dbReference>
<dbReference type="GO" id="GO:0010468">
    <property type="term" value="P:regulation of gene expression"/>
    <property type="evidence" value="ECO:0007669"/>
    <property type="project" value="TreeGrafter"/>
</dbReference>
<dbReference type="GO" id="GO:0007224">
    <property type="term" value="P:smoothened signaling pathway"/>
    <property type="evidence" value="ECO:0007669"/>
    <property type="project" value="TreeGrafter"/>
</dbReference>
<dbReference type="GO" id="GO:0009888">
    <property type="term" value="P:tissue development"/>
    <property type="evidence" value="ECO:0007669"/>
    <property type="project" value="UniProtKB-ARBA"/>
</dbReference>
<dbReference type="Gene3D" id="3.30.1380.10">
    <property type="match status" value="1"/>
</dbReference>
<dbReference type="InterPro" id="IPR001657">
    <property type="entry name" value="Hedgehog"/>
</dbReference>
<dbReference type="InterPro" id="IPR009045">
    <property type="entry name" value="Hedgehog_sig/DD-Pept_Zn-bd_sf"/>
</dbReference>
<dbReference type="InterPro" id="IPR050387">
    <property type="entry name" value="Hedgehog_Signaling"/>
</dbReference>
<dbReference type="InterPro" id="IPR000320">
    <property type="entry name" value="Hedgehog_signalling_dom"/>
</dbReference>
<dbReference type="PANTHER" id="PTHR11889">
    <property type="entry name" value="HEDGEHOG"/>
    <property type="match status" value="1"/>
</dbReference>
<dbReference type="PANTHER" id="PTHR11889:SF36">
    <property type="entry name" value="SONIC HEDGEHOG PROTEIN"/>
    <property type="match status" value="1"/>
</dbReference>
<dbReference type="Pfam" id="PF01085">
    <property type="entry name" value="HH_signal"/>
    <property type="match status" value="1"/>
</dbReference>
<dbReference type="PRINTS" id="PR00632">
    <property type="entry name" value="SONICHHOG"/>
</dbReference>
<dbReference type="SUPFAM" id="SSF55166">
    <property type="entry name" value="Hedgehog/DD-peptidase"/>
    <property type="match status" value="1"/>
</dbReference>
<comment type="function">
    <text evidence="1">Intercellular signal essential for a variety of patterning events during development. Signal produced by the notochord that induces somite patterning, dorso-ventral patterning of the brain and early patterning of the developing eyes. Displays floor plate-inducing activity. Binds to the patched (PTC) receptor, which functions in association with smoothened (SMO), to activate the transcription of target genes. In the absence of SHH, PTC represses the constitutive signaling activity of SMO (By similarity).</text>
</comment>
<comment type="subunit">
    <text evidence="1">N-product is active as a multimer.</text>
</comment>
<comment type="subcellular location">
    <subcellularLocation>
        <location evidence="1">Secreted</location>
    </subcellularLocation>
    <subcellularLocation>
        <location evidence="1">Cell membrane</location>
    </subcellularLocation>
    <text evidence="1">Sonic hedgehog protein C-product: Secreted, extracellular space. Sonic hedgehog protein N-product: Cell membrane; Lipid-anchor. The C-terminal peptide diffuses from the cell, while the N-product either remains associated with lipid rafts at the cell surface, or forms freely diffusible active multimers with its hydrophobic lipid-modified N- and C-termini buried inside.</text>
</comment>
<comment type="domain">
    <text evidence="1">The sonic hedgehog protein N-product binds calcium and zinc ions; this stabilizes the protein fold and is essential for protein-protein interactions mediated by this domain.</text>
</comment>
<comment type="PTM">
    <text>The C-terminal domain displays an autoproteolysis activity and a cholesterol transferase activity. Both activities result in the cleavage of the full-length protein and covalent attachment of a cholesterol moiety to the C-terminal of the newly generated N-terminal fragment (N-product). The N-product is the active species in both local and long-range signaling, whereas the C-product has no signaling activity.</text>
</comment>
<comment type="PTM">
    <text evidence="1">Cholesterylation is required for N-product targeting to lipid rafts and multimerization.</text>
</comment>
<comment type="PTM">
    <text evidence="1">N-palmitoylation is required for N-product multimerization and full activity.</text>
</comment>
<comment type="similarity">
    <text evidence="3">Belongs to the hedgehog family.</text>
</comment>
<gene>
    <name type="primary">shh</name>
</gene>
<accession>P79858</accession>
<accession>P79859</accession>
<reference key="1">
    <citation type="journal article" date="1996" name="Proc. Natl. Acad. Sci. U.S.A.">
        <title>Evolutionary analyses of hedgehog and Hoxd-10 genes in fish species closely related to the zebrafish.</title>
        <authorList>
            <person name="Zardoya R."/>
            <person name="Abouheif E."/>
            <person name="Meyer A."/>
        </authorList>
    </citation>
    <scope>NUCLEOTIDE SEQUENCE [GENOMIC DNA]</scope>
    <source>
        <tissue>Muscle</tissue>
    </source>
</reference>
<sequence length="121" mass="13975">YGKRRHPKKLTPLAYKQFIPNVAEKTLGASGRYEGKITRNSERFKELTPNYNPDIIFKDEENTVMNQWPGVKLRVTEGWDEDGHHFEESLHYEGRAVDITTSDRDKSKYGTLSRLAVEAGF</sequence>
<keyword id="KW-0068">Autocatalytic cleavage</keyword>
<keyword id="KW-0106">Calcium</keyword>
<keyword id="KW-1003">Cell membrane</keyword>
<keyword id="KW-0217">Developmental protein</keyword>
<keyword id="KW-0378">Hydrolase</keyword>
<keyword id="KW-0449">Lipoprotein</keyword>
<keyword id="KW-0472">Membrane</keyword>
<keyword id="KW-0479">Metal-binding</keyword>
<keyword id="KW-0564">Palmitate</keyword>
<keyword id="KW-0645">Protease</keyword>
<keyword id="KW-0964">Secreted</keyword>
<keyword id="KW-0862">Zinc</keyword>